<dbReference type="EC" id="4.1.99.12" evidence="1"/>
<dbReference type="EMBL" id="CP000783">
    <property type="protein sequence ID" value="ABU75666.1"/>
    <property type="molecule type" value="Genomic_DNA"/>
</dbReference>
<dbReference type="RefSeq" id="WP_012123813.1">
    <property type="nucleotide sequence ID" value="NC_009778.1"/>
</dbReference>
<dbReference type="SMR" id="A7MP95"/>
<dbReference type="GeneID" id="56733325"/>
<dbReference type="KEGG" id="esa:ESA_00368"/>
<dbReference type="HOGENOM" id="CLU_020273_3_0_6"/>
<dbReference type="UniPathway" id="UPA00275">
    <property type="reaction ID" value="UER00399"/>
</dbReference>
<dbReference type="Proteomes" id="UP000000260">
    <property type="component" value="Chromosome"/>
</dbReference>
<dbReference type="GO" id="GO:0005829">
    <property type="term" value="C:cytosol"/>
    <property type="evidence" value="ECO:0007669"/>
    <property type="project" value="TreeGrafter"/>
</dbReference>
<dbReference type="GO" id="GO:0008686">
    <property type="term" value="F:3,4-dihydroxy-2-butanone-4-phosphate synthase activity"/>
    <property type="evidence" value="ECO:0007669"/>
    <property type="project" value="UniProtKB-UniRule"/>
</dbReference>
<dbReference type="GO" id="GO:0000287">
    <property type="term" value="F:magnesium ion binding"/>
    <property type="evidence" value="ECO:0007669"/>
    <property type="project" value="UniProtKB-UniRule"/>
</dbReference>
<dbReference type="GO" id="GO:0030145">
    <property type="term" value="F:manganese ion binding"/>
    <property type="evidence" value="ECO:0007669"/>
    <property type="project" value="UniProtKB-UniRule"/>
</dbReference>
<dbReference type="GO" id="GO:0009231">
    <property type="term" value="P:riboflavin biosynthetic process"/>
    <property type="evidence" value="ECO:0007669"/>
    <property type="project" value="UniProtKB-UniRule"/>
</dbReference>
<dbReference type="FunFam" id="3.90.870.10:FF:000002">
    <property type="entry name" value="3,4-dihydroxy-2-butanone 4-phosphate synthase"/>
    <property type="match status" value="1"/>
</dbReference>
<dbReference type="Gene3D" id="3.90.870.10">
    <property type="entry name" value="DHBP synthase"/>
    <property type="match status" value="1"/>
</dbReference>
<dbReference type="HAMAP" id="MF_00180">
    <property type="entry name" value="RibB"/>
    <property type="match status" value="1"/>
</dbReference>
<dbReference type="InterPro" id="IPR017945">
    <property type="entry name" value="DHBP_synth_RibB-like_a/b_dom"/>
</dbReference>
<dbReference type="InterPro" id="IPR000422">
    <property type="entry name" value="DHBP_synthase_RibB"/>
</dbReference>
<dbReference type="NCBIfam" id="TIGR00506">
    <property type="entry name" value="ribB"/>
    <property type="match status" value="1"/>
</dbReference>
<dbReference type="PANTHER" id="PTHR21327:SF38">
    <property type="entry name" value="3,4-DIHYDROXY-2-BUTANONE 4-PHOSPHATE SYNTHASE"/>
    <property type="match status" value="1"/>
</dbReference>
<dbReference type="PANTHER" id="PTHR21327">
    <property type="entry name" value="GTP CYCLOHYDROLASE II-RELATED"/>
    <property type="match status" value="1"/>
</dbReference>
<dbReference type="Pfam" id="PF00926">
    <property type="entry name" value="DHBP_synthase"/>
    <property type="match status" value="1"/>
</dbReference>
<dbReference type="SUPFAM" id="SSF55821">
    <property type="entry name" value="YrdC/RibB"/>
    <property type="match status" value="1"/>
</dbReference>
<proteinExistence type="inferred from homology"/>
<accession>A7MP95</accession>
<organism>
    <name type="scientific">Cronobacter sakazakii (strain ATCC BAA-894)</name>
    <name type="common">Enterobacter sakazakii</name>
    <dbReference type="NCBI Taxonomy" id="290339"/>
    <lineage>
        <taxon>Bacteria</taxon>
        <taxon>Pseudomonadati</taxon>
        <taxon>Pseudomonadota</taxon>
        <taxon>Gammaproteobacteria</taxon>
        <taxon>Enterobacterales</taxon>
        <taxon>Enterobacteriaceae</taxon>
        <taxon>Cronobacter</taxon>
    </lineage>
</organism>
<keyword id="KW-0456">Lyase</keyword>
<keyword id="KW-0460">Magnesium</keyword>
<keyword id="KW-0464">Manganese</keyword>
<keyword id="KW-0479">Metal-binding</keyword>
<keyword id="KW-1185">Reference proteome</keyword>
<keyword id="KW-0686">Riboflavin biosynthesis</keyword>
<sequence>MNQTLLSAFGTAFERVENAIAALREGRGVMVLDDENRENEGDMIFAAETMTVEQMALTIRHGSGIVCLCLTEERRKQLDLPMMVENNTSAFGTGFTVTIEAAHGVTTGVSAADRITTIRAAIADDAKPSDLHRPGHVFPLRAQPGGVLTRGGHTEATIDLVSLAGFKPAGVLCELTNDDGTMARAPECIAFAREHNMPVVTIEDLVSYRQAQERKAS</sequence>
<evidence type="ECO:0000255" key="1">
    <source>
        <dbReference type="HAMAP-Rule" id="MF_00180"/>
    </source>
</evidence>
<feature type="chain" id="PRO_1000040608" description="3,4-dihydroxy-2-butanone 4-phosphate synthase">
    <location>
        <begin position="1"/>
        <end position="217"/>
    </location>
</feature>
<feature type="binding site" evidence="1">
    <location>
        <begin position="37"/>
        <end position="38"/>
    </location>
    <ligand>
        <name>D-ribulose 5-phosphate</name>
        <dbReference type="ChEBI" id="CHEBI:58121"/>
    </ligand>
</feature>
<feature type="binding site" evidence="1">
    <location>
        <position position="38"/>
    </location>
    <ligand>
        <name>Mg(2+)</name>
        <dbReference type="ChEBI" id="CHEBI:18420"/>
        <label>1</label>
    </ligand>
</feature>
<feature type="binding site" evidence="1">
    <location>
        <position position="38"/>
    </location>
    <ligand>
        <name>Mg(2+)</name>
        <dbReference type="ChEBI" id="CHEBI:18420"/>
        <label>2</label>
    </ligand>
</feature>
<feature type="binding site" evidence="1">
    <location>
        <position position="42"/>
    </location>
    <ligand>
        <name>D-ribulose 5-phosphate</name>
        <dbReference type="ChEBI" id="CHEBI:58121"/>
    </ligand>
</feature>
<feature type="binding site" evidence="1">
    <location>
        <begin position="150"/>
        <end position="154"/>
    </location>
    <ligand>
        <name>D-ribulose 5-phosphate</name>
        <dbReference type="ChEBI" id="CHEBI:58121"/>
    </ligand>
</feature>
<feature type="binding site" evidence="1">
    <location>
        <position position="153"/>
    </location>
    <ligand>
        <name>Mg(2+)</name>
        <dbReference type="ChEBI" id="CHEBI:18420"/>
        <label>2</label>
    </ligand>
</feature>
<feature type="binding site" evidence="1">
    <location>
        <position position="174"/>
    </location>
    <ligand>
        <name>D-ribulose 5-phosphate</name>
        <dbReference type="ChEBI" id="CHEBI:58121"/>
    </ligand>
</feature>
<feature type="site" description="Essential for catalytic activity" evidence="1">
    <location>
        <position position="136"/>
    </location>
</feature>
<feature type="site" description="Essential for catalytic activity" evidence="1">
    <location>
        <position position="174"/>
    </location>
</feature>
<comment type="function">
    <text evidence="1">Catalyzes the conversion of D-ribulose 5-phosphate to formate and 3,4-dihydroxy-2-butanone 4-phosphate.</text>
</comment>
<comment type="catalytic activity">
    <reaction evidence="1">
        <text>D-ribulose 5-phosphate = (2S)-2-hydroxy-3-oxobutyl phosphate + formate + H(+)</text>
        <dbReference type="Rhea" id="RHEA:18457"/>
        <dbReference type="ChEBI" id="CHEBI:15378"/>
        <dbReference type="ChEBI" id="CHEBI:15740"/>
        <dbReference type="ChEBI" id="CHEBI:58121"/>
        <dbReference type="ChEBI" id="CHEBI:58830"/>
        <dbReference type="EC" id="4.1.99.12"/>
    </reaction>
</comment>
<comment type="cofactor">
    <cofactor evidence="1">
        <name>Mg(2+)</name>
        <dbReference type="ChEBI" id="CHEBI:18420"/>
    </cofactor>
    <cofactor evidence="1">
        <name>Mn(2+)</name>
        <dbReference type="ChEBI" id="CHEBI:29035"/>
    </cofactor>
    <text evidence="1">Binds 2 divalent metal cations per subunit. Magnesium or manganese.</text>
</comment>
<comment type="pathway">
    <text evidence="1">Cofactor biosynthesis; riboflavin biosynthesis; 2-hydroxy-3-oxobutyl phosphate from D-ribulose 5-phosphate: step 1/1.</text>
</comment>
<comment type="subunit">
    <text evidence="1">Homodimer.</text>
</comment>
<comment type="similarity">
    <text evidence="1">Belongs to the DHBP synthase family.</text>
</comment>
<reference key="1">
    <citation type="journal article" date="2010" name="PLoS ONE">
        <title>Genome sequence of Cronobacter sakazakii BAA-894 and comparative genomic hybridization analysis with other Cronobacter species.</title>
        <authorList>
            <person name="Kucerova E."/>
            <person name="Clifton S.W."/>
            <person name="Xia X.Q."/>
            <person name="Long F."/>
            <person name="Porwollik S."/>
            <person name="Fulton L."/>
            <person name="Fronick C."/>
            <person name="Minx P."/>
            <person name="Kyung K."/>
            <person name="Warren W."/>
            <person name="Fulton R."/>
            <person name="Feng D."/>
            <person name="Wollam A."/>
            <person name="Shah N."/>
            <person name="Bhonagiri V."/>
            <person name="Nash W.E."/>
            <person name="Hallsworth-Pepin K."/>
            <person name="Wilson R.K."/>
            <person name="McClelland M."/>
            <person name="Forsythe S.J."/>
        </authorList>
    </citation>
    <scope>NUCLEOTIDE SEQUENCE [LARGE SCALE GENOMIC DNA]</scope>
    <source>
        <strain>ATCC BAA-894</strain>
    </source>
</reference>
<protein>
    <recommendedName>
        <fullName evidence="1">3,4-dihydroxy-2-butanone 4-phosphate synthase</fullName>
        <shortName evidence="1">DHBP synthase</shortName>
        <ecNumber evidence="1">4.1.99.12</ecNumber>
    </recommendedName>
</protein>
<name>RIBB_CROS8</name>
<gene>
    <name evidence="1" type="primary">ribB</name>
    <name type="ordered locus">ESA_00368</name>
</gene>